<accession>Q27869</accession>
<accession>Q9VND1</accession>
<proteinExistence type="evidence at protein level"/>
<comment type="function">
    <text evidence="2 3">Initiates the repair of damaged proteins by catalyzing methyl esterification of L-isoaspartyl and D-aspartyl residues produced by spontaneous isomerization and racemization of L-aspartyl and L-asparaginyl residues in aging peptides and proteins.</text>
</comment>
<comment type="catalytic activity">
    <reaction evidence="2">
        <text>[protein]-L-isoaspartate + S-adenosyl-L-methionine = [protein]-L-isoaspartate alpha-methyl ester + S-adenosyl-L-homocysteine</text>
        <dbReference type="Rhea" id="RHEA:12705"/>
        <dbReference type="Rhea" id="RHEA-COMP:12143"/>
        <dbReference type="Rhea" id="RHEA-COMP:12144"/>
        <dbReference type="ChEBI" id="CHEBI:57856"/>
        <dbReference type="ChEBI" id="CHEBI:59789"/>
        <dbReference type="ChEBI" id="CHEBI:90596"/>
        <dbReference type="ChEBI" id="CHEBI:90598"/>
        <dbReference type="EC" id="2.1.1.77"/>
    </reaction>
    <physiologicalReaction direction="left-to-right" evidence="5">
        <dbReference type="Rhea" id="RHEA:12706"/>
    </physiologicalReaction>
</comment>
<comment type="subunit">
    <text evidence="2">Monomer.</text>
</comment>
<comment type="subcellular location">
    <subcellularLocation>
        <location evidence="1">Cytoplasm</location>
        <location evidence="1">Cytosol</location>
    </subcellularLocation>
</comment>
<comment type="developmental stage">
    <text evidence="3">Expressed throughout development, lowest in larvae and highest in adults.</text>
</comment>
<comment type="similarity">
    <text evidence="4">Belongs to the methyltransferase superfamily. L-isoaspartyl/D-aspartyl protein methyltransferase family.</text>
</comment>
<reference key="1">
    <citation type="journal article" date="1997" name="Insect Biochem. Mol. Biol.">
        <title>Structural organization and developmental expression of the protein isoaspartyl methyltransferase gene from Drosophila melanogaster.</title>
        <authorList>
            <person name="O'Connor M.B."/>
            <person name="Galus A."/>
            <person name="Hartenstine M."/>
            <person name="Magee M."/>
            <person name="Jackson F.R."/>
            <person name="O'Connor C.M."/>
        </authorList>
    </citation>
    <scope>NUCLEOTIDE SEQUENCE [MRNA]</scope>
    <scope>FUNCTION</scope>
    <scope>DEVELOPMENTAL STAGE</scope>
</reference>
<reference key="2">
    <citation type="submission" date="2001-08" db="EMBL/GenBank/DDBJ databases">
        <authorList>
            <person name="O'Connor C.M."/>
        </authorList>
    </citation>
    <scope>SEQUENCE REVISION TO 124</scope>
</reference>
<reference key="3">
    <citation type="journal article" date="2000" name="Science">
        <title>The genome sequence of Drosophila melanogaster.</title>
        <authorList>
            <person name="Adams M.D."/>
            <person name="Celniker S.E."/>
            <person name="Holt R.A."/>
            <person name="Evans C.A."/>
            <person name="Gocayne J.D."/>
            <person name="Amanatides P.G."/>
            <person name="Scherer S.E."/>
            <person name="Li P.W."/>
            <person name="Hoskins R.A."/>
            <person name="Galle R.F."/>
            <person name="George R.A."/>
            <person name="Lewis S.E."/>
            <person name="Richards S."/>
            <person name="Ashburner M."/>
            <person name="Henderson S.N."/>
            <person name="Sutton G.G."/>
            <person name="Wortman J.R."/>
            <person name="Yandell M.D."/>
            <person name="Zhang Q."/>
            <person name="Chen L.X."/>
            <person name="Brandon R.C."/>
            <person name="Rogers Y.-H.C."/>
            <person name="Blazej R.G."/>
            <person name="Champe M."/>
            <person name="Pfeiffer B.D."/>
            <person name="Wan K.H."/>
            <person name="Doyle C."/>
            <person name="Baxter E.G."/>
            <person name="Helt G."/>
            <person name="Nelson C.R."/>
            <person name="Miklos G.L.G."/>
            <person name="Abril J.F."/>
            <person name="Agbayani A."/>
            <person name="An H.-J."/>
            <person name="Andrews-Pfannkoch C."/>
            <person name="Baldwin D."/>
            <person name="Ballew R.M."/>
            <person name="Basu A."/>
            <person name="Baxendale J."/>
            <person name="Bayraktaroglu L."/>
            <person name="Beasley E.M."/>
            <person name="Beeson K.Y."/>
            <person name="Benos P.V."/>
            <person name="Berman B.P."/>
            <person name="Bhandari D."/>
            <person name="Bolshakov S."/>
            <person name="Borkova D."/>
            <person name="Botchan M.R."/>
            <person name="Bouck J."/>
            <person name="Brokstein P."/>
            <person name="Brottier P."/>
            <person name="Burtis K.C."/>
            <person name="Busam D.A."/>
            <person name="Butler H."/>
            <person name="Cadieu E."/>
            <person name="Center A."/>
            <person name="Chandra I."/>
            <person name="Cherry J.M."/>
            <person name="Cawley S."/>
            <person name="Dahlke C."/>
            <person name="Davenport L.B."/>
            <person name="Davies P."/>
            <person name="de Pablos B."/>
            <person name="Delcher A."/>
            <person name="Deng Z."/>
            <person name="Mays A.D."/>
            <person name="Dew I."/>
            <person name="Dietz S.M."/>
            <person name="Dodson K."/>
            <person name="Doup L.E."/>
            <person name="Downes M."/>
            <person name="Dugan-Rocha S."/>
            <person name="Dunkov B.C."/>
            <person name="Dunn P."/>
            <person name="Durbin K.J."/>
            <person name="Evangelista C.C."/>
            <person name="Ferraz C."/>
            <person name="Ferriera S."/>
            <person name="Fleischmann W."/>
            <person name="Fosler C."/>
            <person name="Gabrielian A.E."/>
            <person name="Garg N.S."/>
            <person name="Gelbart W.M."/>
            <person name="Glasser K."/>
            <person name="Glodek A."/>
            <person name="Gong F."/>
            <person name="Gorrell J.H."/>
            <person name="Gu Z."/>
            <person name="Guan P."/>
            <person name="Harris M."/>
            <person name="Harris N.L."/>
            <person name="Harvey D.A."/>
            <person name="Heiman T.J."/>
            <person name="Hernandez J.R."/>
            <person name="Houck J."/>
            <person name="Hostin D."/>
            <person name="Houston K.A."/>
            <person name="Howland T.J."/>
            <person name="Wei M.-H."/>
            <person name="Ibegwam C."/>
            <person name="Jalali M."/>
            <person name="Kalush F."/>
            <person name="Karpen G.H."/>
            <person name="Ke Z."/>
            <person name="Kennison J.A."/>
            <person name="Ketchum K.A."/>
            <person name="Kimmel B.E."/>
            <person name="Kodira C.D."/>
            <person name="Kraft C.L."/>
            <person name="Kravitz S."/>
            <person name="Kulp D."/>
            <person name="Lai Z."/>
            <person name="Lasko P."/>
            <person name="Lei Y."/>
            <person name="Levitsky A.A."/>
            <person name="Li J.H."/>
            <person name="Li Z."/>
            <person name="Liang Y."/>
            <person name="Lin X."/>
            <person name="Liu X."/>
            <person name="Mattei B."/>
            <person name="McIntosh T.C."/>
            <person name="McLeod M.P."/>
            <person name="McPherson D."/>
            <person name="Merkulov G."/>
            <person name="Milshina N.V."/>
            <person name="Mobarry C."/>
            <person name="Morris J."/>
            <person name="Moshrefi A."/>
            <person name="Mount S.M."/>
            <person name="Moy M."/>
            <person name="Murphy B."/>
            <person name="Murphy L."/>
            <person name="Muzny D.M."/>
            <person name="Nelson D.L."/>
            <person name="Nelson D.R."/>
            <person name="Nelson K.A."/>
            <person name="Nixon K."/>
            <person name="Nusskern D.R."/>
            <person name="Pacleb J.M."/>
            <person name="Palazzolo M."/>
            <person name="Pittman G.S."/>
            <person name="Pan S."/>
            <person name="Pollard J."/>
            <person name="Puri V."/>
            <person name="Reese M.G."/>
            <person name="Reinert K."/>
            <person name="Remington K."/>
            <person name="Saunders R.D.C."/>
            <person name="Scheeler F."/>
            <person name="Shen H."/>
            <person name="Shue B.C."/>
            <person name="Siden-Kiamos I."/>
            <person name="Simpson M."/>
            <person name="Skupski M.P."/>
            <person name="Smith T.J."/>
            <person name="Spier E."/>
            <person name="Spradling A.C."/>
            <person name="Stapleton M."/>
            <person name="Strong R."/>
            <person name="Sun E."/>
            <person name="Svirskas R."/>
            <person name="Tector C."/>
            <person name="Turner R."/>
            <person name="Venter E."/>
            <person name="Wang A.H."/>
            <person name="Wang X."/>
            <person name="Wang Z.-Y."/>
            <person name="Wassarman D.A."/>
            <person name="Weinstock G.M."/>
            <person name="Weissenbach J."/>
            <person name="Williams S.M."/>
            <person name="Woodage T."/>
            <person name="Worley K.C."/>
            <person name="Wu D."/>
            <person name="Yang S."/>
            <person name="Yao Q.A."/>
            <person name="Ye J."/>
            <person name="Yeh R.-F."/>
            <person name="Zaveri J.S."/>
            <person name="Zhan M."/>
            <person name="Zhang G."/>
            <person name="Zhao Q."/>
            <person name="Zheng L."/>
            <person name="Zheng X.H."/>
            <person name="Zhong F.N."/>
            <person name="Zhong W."/>
            <person name="Zhou X."/>
            <person name="Zhu S.C."/>
            <person name="Zhu X."/>
            <person name="Smith H.O."/>
            <person name="Gibbs R.A."/>
            <person name="Myers E.W."/>
            <person name="Rubin G.M."/>
            <person name="Venter J.C."/>
        </authorList>
    </citation>
    <scope>NUCLEOTIDE SEQUENCE [LARGE SCALE GENOMIC DNA]</scope>
    <source>
        <strain>Berkeley</strain>
    </source>
</reference>
<reference key="4">
    <citation type="journal article" date="2002" name="Genome Biol.">
        <title>Annotation of the Drosophila melanogaster euchromatic genome: a systematic review.</title>
        <authorList>
            <person name="Misra S."/>
            <person name="Crosby M.A."/>
            <person name="Mungall C.J."/>
            <person name="Matthews B.B."/>
            <person name="Campbell K.S."/>
            <person name="Hradecky P."/>
            <person name="Huang Y."/>
            <person name="Kaminker J.S."/>
            <person name="Millburn G.H."/>
            <person name="Prochnik S.E."/>
            <person name="Smith C.D."/>
            <person name="Tupy J.L."/>
            <person name="Whitfield E.J."/>
            <person name="Bayraktaroglu L."/>
            <person name="Berman B.P."/>
            <person name="Bettencourt B.R."/>
            <person name="Celniker S.E."/>
            <person name="de Grey A.D.N.J."/>
            <person name="Drysdale R.A."/>
            <person name="Harris N.L."/>
            <person name="Richter J."/>
            <person name="Russo S."/>
            <person name="Schroeder A.J."/>
            <person name="Shu S.Q."/>
            <person name="Stapleton M."/>
            <person name="Yamada C."/>
            <person name="Ashburner M."/>
            <person name="Gelbart W.M."/>
            <person name="Rubin G.M."/>
            <person name="Lewis S.E."/>
        </authorList>
    </citation>
    <scope>GENOME REANNOTATION</scope>
    <source>
        <strain>Berkeley</strain>
    </source>
</reference>
<reference key="5">
    <citation type="journal article" date="2002" name="Genome Biol.">
        <title>A Drosophila full-length cDNA resource.</title>
        <authorList>
            <person name="Stapleton M."/>
            <person name="Carlson J.W."/>
            <person name="Brokstein P."/>
            <person name="Yu C."/>
            <person name="Champe M."/>
            <person name="George R.A."/>
            <person name="Guarin H."/>
            <person name="Kronmiller B."/>
            <person name="Pacleb J.M."/>
            <person name="Park S."/>
            <person name="Wan K.H."/>
            <person name="Rubin G.M."/>
            <person name="Celniker S.E."/>
        </authorList>
    </citation>
    <scope>NUCLEOTIDE SEQUENCE [LARGE SCALE MRNA]</scope>
    <source>
        <strain>Berkeley</strain>
        <tissue>Embryo</tissue>
    </source>
</reference>
<reference key="6">
    <citation type="journal article" date="2003" name="Biochemistry">
        <title>Catalytic implications from the Drosophila protein L-isoaspartyl methyltransferase structure and site-directed mutagenesis.</title>
        <authorList>
            <person name="Bennett E.J."/>
            <person name="Bjerregaard J."/>
            <person name="Knapp J.E."/>
            <person name="Chavous D.A."/>
            <person name="Friedman A.M."/>
            <person name="Royer W.E. Jr."/>
            <person name="O'Connor C.M."/>
        </authorList>
    </citation>
    <scope>X-RAY CRYSTALLOGRAPHY (2.2 ANGSTROMS) OF 1-221</scope>
    <scope>FUNCTION</scope>
    <scope>CATALYTIC ACTIVITY</scope>
    <scope>SUBUNIT</scope>
    <scope>ACTIVE SITE</scope>
    <scope>MUTAGENESIS OF SER-60</scope>
</reference>
<evidence type="ECO:0000250" key="1">
    <source>
        <dbReference type="UniProtKB" id="P22061"/>
    </source>
</evidence>
<evidence type="ECO:0000269" key="2">
    <source>
    </source>
</evidence>
<evidence type="ECO:0000269" key="3">
    <source>
    </source>
</evidence>
<evidence type="ECO:0000305" key="4"/>
<evidence type="ECO:0000305" key="5">
    <source>
    </source>
</evidence>
<evidence type="ECO:0007829" key="6">
    <source>
        <dbReference type="PDB" id="1R18"/>
    </source>
</evidence>
<organism>
    <name type="scientific">Drosophila melanogaster</name>
    <name type="common">Fruit fly</name>
    <dbReference type="NCBI Taxonomy" id="7227"/>
    <lineage>
        <taxon>Eukaryota</taxon>
        <taxon>Metazoa</taxon>
        <taxon>Ecdysozoa</taxon>
        <taxon>Arthropoda</taxon>
        <taxon>Hexapoda</taxon>
        <taxon>Insecta</taxon>
        <taxon>Pterygota</taxon>
        <taxon>Neoptera</taxon>
        <taxon>Endopterygota</taxon>
        <taxon>Diptera</taxon>
        <taxon>Brachycera</taxon>
        <taxon>Muscomorpha</taxon>
        <taxon>Ephydroidea</taxon>
        <taxon>Drosophilidae</taxon>
        <taxon>Drosophila</taxon>
        <taxon>Sophophora</taxon>
    </lineage>
</organism>
<keyword id="KW-0002">3D-structure</keyword>
<keyword id="KW-0963">Cytoplasm</keyword>
<keyword id="KW-0489">Methyltransferase</keyword>
<keyword id="KW-1185">Reference proteome</keyword>
<keyword id="KW-0949">S-adenosyl-L-methionine</keyword>
<keyword id="KW-0808">Transferase</keyword>
<protein>
    <recommendedName>
        <fullName evidence="5">Protein-L-isoaspartate(D-aspartate) O-methyltransferase</fullName>
        <shortName>PIMT</shortName>
        <ecNumber evidence="2">2.1.1.77</ecNumber>
    </recommendedName>
    <alternativeName>
        <fullName>L-isoaspartyl protein carboxyl methyltransferase</fullName>
    </alternativeName>
    <alternativeName>
        <fullName>Protein L-isoaspartyl/D-aspartyl methyltransferase</fullName>
    </alternativeName>
    <alternativeName>
        <fullName>Protein-beta-aspartate methyltransferase</fullName>
    </alternativeName>
    <alternativeName>
        <fullName>dPIMT</fullName>
    </alternativeName>
</protein>
<feature type="chain" id="PRO_0000111881" description="Protein-L-isoaspartate(D-aspartate) O-methyltransferase">
    <location>
        <begin position="1"/>
        <end position="226"/>
    </location>
</feature>
<feature type="active site" evidence="2">
    <location>
        <position position="60"/>
    </location>
</feature>
<feature type="binding site" evidence="1">
    <location>
        <begin position="57"/>
        <end position="60"/>
    </location>
    <ligand>
        <name>S-adenosyl-L-homocysteine</name>
        <dbReference type="ChEBI" id="CHEBI:57856"/>
    </ligand>
</feature>
<feature type="binding site" evidence="1">
    <location>
        <position position="65"/>
    </location>
    <ligand>
        <name>S-adenosyl-L-homocysteine</name>
        <dbReference type="ChEBI" id="CHEBI:57856"/>
    </ligand>
</feature>
<feature type="binding site" evidence="1">
    <location>
        <position position="89"/>
    </location>
    <ligand>
        <name>S-adenosyl-L-homocysteine</name>
        <dbReference type="ChEBI" id="CHEBI:57856"/>
    </ligand>
</feature>
<feature type="binding site" evidence="1">
    <location>
        <begin position="115"/>
        <end position="116"/>
    </location>
    <ligand>
        <name>S-adenosyl-L-homocysteine</name>
        <dbReference type="ChEBI" id="CHEBI:57856"/>
    </ligand>
</feature>
<feature type="binding site" evidence="1">
    <location>
        <begin position="147"/>
        <end position="148"/>
    </location>
    <ligand>
        <name>S-adenosyl-L-homocysteine</name>
        <dbReference type="ChEBI" id="CHEBI:57856"/>
    </ligand>
</feature>
<feature type="binding site" evidence="1">
    <location>
        <position position="222"/>
    </location>
    <ligand>
        <name>S-adenosyl-L-homocysteine</name>
        <dbReference type="ChEBI" id="CHEBI:57856"/>
    </ligand>
</feature>
<feature type="mutagenesis site" description="Reduces catalytic efficiency." evidence="2">
    <original>S</original>
    <variation>A</variation>
    <location>
        <position position="60"/>
    </location>
</feature>
<feature type="mutagenesis site" description="Loss of catalytic activity." evidence="2">
    <original>S</original>
    <variation>Q</variation>
    <location>
        <position position="60"/>
    </location>
</feature>
<feature type="mutagenesis site" description="Reduces catalytic efficiency." evidence="2">
    <original>S</original>
    <variation>T</variation>
    <location>
        <position position="60"/>
    </location>
</feature>
<feature type="helix" evidence="6">
    <location>
        <begin position="10"/>
        <end position="19"/>
    </location>
</feature>
<feature type="helix" evidence="6">
    <location>
        <begin position="26"/>
        <end position="33"/>
    </location>
</feature>
<feature type="helix" evidence="6">
    <location>
        <begin position="37"/>
        <end position="39"/>
    </location>
</feature>
<feature type="strand" evidence="6">
    <location>
        <begin position="47"/>
        <end position="49"/>
    </location>
</feature>
<feature type="strand" evidence="6">
    <location>
        <begin position="51"/>
        <end position="54"/>
    </location>
</feature>
<feature type="strand" evidence="6">
    <location>
        <begin position="57"/>
        <end position="59"/>
    </location>
</feature>
<feature type="helix" evidence="6">
    <location>
        <begin position="62"/>
        <end position="71"/>
    </location>
</feature>
<feature type="turn" evidence="6">
    <location>
        <begin position="72"/>
        <end position="75"/>
    </location>
</feature>
<feature type="strand" evidence="6">
    <location>
        <begin position="81"/>
        <end position="86"/>
    </location>
</feature>
<feature type="helix" evidence="6">
    <location>
        <begin position="91"/>
        <end position="102"/>
    </location>
</feature>
<feature type="strand" evidence="6">
    <location>
        <begin position="110"/>
        <end position="116"/>
    </location>
</feature>
<feature type="helix" evidence="6">
    <location>
        <begin position="118"/>
        <end position="132"/>
    </location>
</feature>
<feature type="helix" evidence="6">
    <location>
        <begin position="134"/>
        <end position="137"/>
    </location>
</feature>
<feature type="strand" evidence="6">
    <location>
        <begin position="140"/>
        <end position="146"/>
    </location>
</feature>
<feature type="helix" evidence="6">
    <location>
        <begin position="148"/>
        <end position="150"/>
    </location>
</feature>
<feature type="helix" evidence="6">
    <location>
        <begin position="153"/>
        <end position="155"/>
    </location>
</feature>
<feature type="strand" evidence="6">
    <location>
        <begin position="157"/>
        <end position="163"/>
    </location>
</feature>
<feature type="strand" evidence="6">
    <location>
        <begin position="167"/>
        <end position="169"/>
    </location>
</feature>
<feature type="helix" evidence="6">
    <location>
        <begin position="172"/>
        <end position="176"/>
    </location>
</feature>
<feature type="strand" evidence="6">
    <location>
        <begin position="178"/>
        <end position="189"/>
    </location>
</feature>
<feature type="strand" evidence="6">
    <location>
        <begin position="191"/>
        <end position="193"/>
    </location>
</feature>
<feature type="strand" evidence="6">
    <location>
        <begin position="195"/>
        <end position="202"/>
    </location>
</feature>
<feature type="strand" evidence="6">
    <location>
        <begin position="208"/>
        <end position="216"/>
    </location>
</feature>
<sequence>MAWRSVGANNEDLIRQLKDHGVIASDAVAQAMKETDRKHYSPRNPYMDAPQPIGGGVTISAPHMHAFALEYLRDHLKPGARILDVGSGSGYLTACFYRYIKAKGVDADTRIVGIEHQAELVRRSKANLNTDDRSMLDSGQLLIVEGDGRKGYPPNAPYNAIHVGAAAPDTPTELINQLASGGRLIVPVGPDGGSQYMQQYDKDANGKVEMTRLMGVMYVPLTDLRS</sequence>
<gene>
    <name type="primary">Pcmt</name>
    <name type="synonym">PIAM</name>
    <name type="ORF">CG2152</name>
</gene>
<dbReference type="EC" id="2.1.1.77" evidence="2"/>
<dbReference type="EMBL" id="U43737">
    <property type="protein sequence ID" value="AAA86272.2"/>
    <property type="molecule type" value="Genomic_DNA"/>
</dbReference>
<dbReference type="EMBL" id="U37432">
    <property type="protein sequence ID" value="AAA80540.2"/>
    <property type="molecule type" value="mRNA"/>
</dbReference>
<dbReference type="EMBL" id="AE014297">
    <property type="protein sequence ID" value="AAF52012.1"/>
    <property type="molecule type" value="Genomic_DNA"/>
</dbReference>
<dbReference type="EMBL" id="AY070630">
    <property type="protein sequence ID" value="AAL48101.1"/>
    <property type="molecule type" value="mRNA"/>
</dbReference>
<dbReference type="EMBL" id="AY075527">
    <property type="protein sequence ID" value="AAL68334.1"/>
    <property type="molecule type" value="mRNA"/>
</dbReference>
<dbReference type="RefSeq" id="NP_536756.1">
    <property type="nucleotide sequence ID" value="NM_080508.4"/>
</dbReference>
<dbReference type="PDB" id="1R18">
    <property type="method" value="X-ray"/>
    <property type="resolution" value="2.20 A"/>
    <property type="chains" value="A=1-221"/>
</dbReference>
<dbReference type="PDBsum" id="1R18"/>
<dbReference type="SMR" id="Q27869"/>
<dbReference type="BioGRID" id="65875">
    <property type="interactions" value="1"/>
</dbReference>
<dbReference type="FunCoup" id="Q27869">
    <property type="interactions" value="931"/>
</dbReference>
<dbReference type="IntAct" id="Q27869">
    <property type="interactions" value="2"/>
</dbReference>
<dbReference type="STRING" id="7227.FBpp0078405"/>
<dbReference type="PaxDb" id="7227-FBpp0078405"/>
<dbReference type="EnsemblMetazoa" id="FBtr0078758">
    <property type="protein sequence ID" value="FBpp0078405"/>
    <property type="gene ID" value="FBgn0086768"/>
</dbReference>
<dbReference type="GeneID" id="40668"/>
<dbReference type="KEGG" id="dme:Dmel_CG2152"/>
<dbReference type="AGR" id="FB:FBgn0086768"/>
<dbReference type="CTD" id="30751"/>
<dbReference type="FlyBase" id="FBgn0086768">
    <property type="gene designation" value="Pcmt"/>
</dbReference>
<dbReference type="VEuPathDB" id="VectorBase:FBgn0086768"/>
<dbReference type="eggNOG" id="KOG1661">
    <property type="taxonomic scope" value="Eukaryota"/>
</dbReference>
<dbReference type="GeneTree" id="ENSGT00950000183032"/>
<dbReference type="HOGENOM" id="CLU_055432_0_4_1"/>
<dbReference type="InParanoid" id="Q27869"/>
<dbReference type="OMA" id="HMHASAC"/>
<dbReference type="OrthoDB" id="73890at2759"/>
<dbReference type="PhylomeDB" id="Q27869"/>
<dbReference type="BRENDA" id="2.1.1.77">
    <property type="organism ID" value="1994"/>
</dbReference>
<dbReference type="Reactome" id="R-DME-5676934">
    <property type="pathway name" value="Protein repair"/>
</dbReference>
<dbReference type="BioGRID-ORCS" id="40668">
    <property type="hits" value="0 hits in 1 CRISPR screen"/>
</dbReference>
<dbReference type="ChiTaRS" id="Pcmt">
    <property type="organism name" value="fly"/>
</dbReference>
<dbReference type="EvolutionaryTrace" id="Q27869"/>
<dbReference type="GenomeRNAi" id="40668"/>
<dbReference type="PRO" id="PR:Q27869"/>
<dbReference type="Proteomes" id="UP000000803">
    <property type="component" value="Chromosome 3R"/>
</dbReference>
<dbReference type="Bgee" id="FBgn0086768">
    <property type="expression patterns" value="Expressed in eye disc (Drosophila) and 170 other cell types or tissues"/>
</dbReference>
<dbReference type="ExpressionAtlas" id="Q27869">
    <property type="expression patterns" value="baseline and differential"/>
</dbReference>
<dbReference type="GO" id="GO:0005737">
    <property type="term" value="C:cytoplasm"/>
    <property type="evidence" value="ECO:0000318"/>
    <property type="project" value="GO_Central"/>
</dbReference>
<dbReference type="GO" id="GO:0005829">
    <property type="term" value="C:cytosol"/>
    <property type="evidence" value="ECO:0007669"/>
    <property type="project" value="UniProtKB-SubCell"/>
</dbReference>
<dbReference type="GO" id="GO:0004719">
    <property type="term" value="F:protein-L-isoaspartate (D-aspartate) O-methyltransferase activity"/>
    <property type="evidence" value="ECO:0000314"/>
    <property type="project" value="FlyBase"/>
</dbReference>
<dbReference type="GO" id="GO:0042742">
    <property type="term" value="P:defense response to bacterium"/>
    <property type="evidence" value="ECO:0000315"/>
    <property type="project" value="FlyBase"/>
</dbReference>
<dbReference type="GO" id="GO:0032259">
    <property type="term" value="P:methylation"/>
    <property type="evidence" value="ECO:0007669"/>
    <property type="project" value="UniProtKB-KW"/>
</dbReference>
<dbReference type="GO" id="GO:0036211">
    <property type="term" value="P:protein modification process"/>
    <property type="evidence" value="ECO:0007669"/>
    <property type="project" value="InterPro"/>
</dbReference>
<dbReference type="CDD" id="cd02440">
    <property type="entry name" value="AdoMet_MTases"/>
    <property type="match status" value="1"/>
</dbReference>
<dbReference type="FunFam" id="3.40.50.150:FF:000235">
    <property type="entry name" value="Protein-L-isoaspartate O-methyltransferase"/>
    <property type="match status" value="1"/>
</dbReference>
<dbReference type="Gene3D" id="3.40.50.150">
    <property type="entry name" value="Vaccinia Virus protein VP39"/>
    <property type="match status" value="1"/>
</dbReference>
<dbReference type="InterPro" id="IPR000682">
    <property type="entry name" value="PCMT"/>
</dbReference>
<dbReference type="InterPro" id="IPR029063">
    <property type="entry name" value="SAM-dependent_MTases_sf"/>
</dbReference>
<dbReference type="NCBIfam" id="TIGR00080">
    <property type="entry name" value="pimt"/>
    <property type="match status" value="1"/>
</dbReference>
<dbReference type="PANTHER" id="PTHR11579">
    <property type="entry name" value="PROTEIN-L-ISOASPARTATE O-METHYLTRANSFERASE"/>
    <property type="match status" value="1"/>
</dbReference>
<dbReference type="PANTHER" id="PTHR11579:SF0">
    <property type="entry name" value="PROTEIN-L-ISOASPARTATE(D-ASPARTATE) O-METHYLTRANSFERASE"/>
    <property type="match status" value="1"/>
</dbReference>
<dbReference type="Pfam" id="PF01135">
    <property type="entry name" value="PCMT"/>
    <property type="match status" value="1"/>
</dbReference>
<dbReference type="SUPFAM" id="SSF53335">
    <property type="entry name" value="S-adenosyl-L-methionine-dependent methyltransferases"/>
    <property type="match status" value="1"/>
</dbReference>
<dbReference type="PROSITE" id="PS01279">
    <property type="entry name" value="PCMT"/>
    <property type="match status" value="1"/>
</dbReference>
<name>PIMT_DROME</name>